<evidence type="ECO:0000250" key="1">
    <source>
        <dbReference type="UniProtKB" id="P53994"/>
    </source>
</evidence>
<evidence type="ECO:0000250" key="2">
    <source>
        <dbReference type="UniProtKB" id="P61019"/>
    </source>
</evidence>
<evidence type="ECO:0000250" key="3">
    <source>
        <dbReference type="UniProtKB" id="P61106"/>
    </source>
</evidence>
<evidence type="ECO:0000255" key="4"/>
<evidence type="ECO:0000305" key="5"/>
<keyword id="KW-0968">Cytoplasmic vesicle</keyword>
<keyword id="KW-0256">Endoplasmic reticulum</keyword>
<keyword id="KW-0931">ER-Golgi transport</keyword>
<keyword id="KW-0333">Golgi apparatus</keyword>
<keyword id="KW-0342">GTP-binding</keyword>
<keyword id="KW-0378">Hydrolase</keyword>
<keyword id="KW-0449">Lipoprotein</keyword>
<keyword id="KW-0460">Magnesium</keyword>
<keyword id="KW-0472">Membrane</keyword>
<keyword id="KW-0479">Metal-binding</keyword>
<keyword id="KW-0547">Nucleotide-binding</keyword>
<keyword id="KW-0653">Protein transport</keyword>
<keyword id="KW-1185">Reference proteome</keyword>
<keyword id="KW-0813">Transport</keyword>
<protein>
    <recommendedName>
        <fullName evidence="2">Ras-related protein Rab-2A</fullName>
        <ecNumber evidence="1">3.6.5.2</ecNumber>
    </recommendedName>
</protein>
<gene>
    <name evidence="2" type="primary">RAB2A</name>
    <name evidence="2" type="synonym">RAB2</name>
</gene>
<dbReference type="EC" id="3.6.5.2" evidence="1"/>
<dbReference type="Proteomes" id="UP000189706">
    <property type="component" value="Unplaced"/>
</dbReference>
<dbReference type="GO" id="GO:0001669">
    <property type="term" value="C:acrosomal vesicle"/>
    <property type="evidence" value="ECO:0007669"/>
    <property type="project" value="UniProtKB-SubCell"/>
</dbReference>
<dbReference type="GO" id="GO:0000421">
    <property type="term" value="C:autophagosome membrane"/>
    <property type="evidence" value="ECO:0007669"/>
    <property type="project" value="UniProtKB-SubCell"/>
</dbReference>
<dbReference type="GO" id="GO:0005789">
    <property type="term" value="C:endoplasmic reticulum membrane"/>
    <property type="evidence" value="ECO:0007669"/>
    <property type="project" value="UniProtKB-SubCell"/>
</dbReference>
<dbReference type="GO" id="GO:0033116">
    <property type="term" value="C:endoplasmic reticulum-Golgi intermediate compartment membrane"/>
    <property type="evidence" value="ECO:0007669"/>
    <property type="project" value="UniProtKB-SubCell"/>
</dbReference>
<dbReference type="GO" id="GO:0000139">
    <property type="term" value="C:Golgi membrane"/>
    <property type="evidence" value="ECO:0007669"/>
    <property type="project" value="UniProtKB-SubCell"/>
</dbReference>
<dbReference type="GO" id="GO:0042470">
    <property type="term" value="C:melanosome"/>
    <property type="evidence" value="ECO:0007669"/>
    <property type="project" value="UniProtKB-SubCell"/>
</dbReference>
<dbReference type="GO" id="GO:0003925">
    <property type="term" value="F:G protein activity"/>
    <property type="evidence" value="ECO:0000250"/>
    <property type="project" value="UniProtKB"/>
</dbReference>
<dbReference type="GO" id="GO:0005525">
    <property type="term" value="F:GTP binding"/>
    <property type="evidence" value="ECO:0007669"/>
    <property type="project" value="UniProtKB-KW"/>
</dbReference>
<dbReference type="GO" id="GO:0061909">
    <property type="term" value="P:autophagosome-lysosome fusion"/>
    <property type="evidence" value="ECO:0000250"/>
    <property type="project" value="UniProtKB"/>
</dbReference>
<dbReference type="GO" id="GO:0007030">
    <property type="term" value="P:Golgi organization"/>
    <property type="evidence" value="ECO:0000250"/>
    <property type="project" value="UniProtKB"/>
</dbReference>
<dbReference type="GO" id="GO:0015031">
    <property type="term" value="P:protein transport"/>
    <property type="evidence" value="ECO:0007669"/>
    <property type="project" value="UniProtKB-KW"/>
</dbReference>
<dbReference type="SMART" id="SM00175">
    <property type="entry name" value="RAB"/>
    <property type="match status" value="1"/>
</dbReference>
<reference key="1">
    <citation type="journal article" date="2010" name="Asian J. Androl.">
        <title>Glucose-regulated protein precursor (GRP78) and tumor rejection antigen (GP96) are unique to hamster caput epididymal spermatozoa.</title>
        <authorList>
            <person name="Kameshwari D.B."/>
            <person name="Bhande S."/>
            <person name="Sundaram C.S."/>
            <person name="Kota V."/>
            <person name="Siva A.B."/>
            <person name="Shivaji S."/>
        </authorList>
    </citation>
    <scope>IDENTIFICATION BY MASS SPECTROMETRY</scope>
</reference>
<organism>
    <name type="scientific">Mesocricetus auratus</name>
    <name type="common">Golden hamster</name>
    <dbReference type="NCBI Taxonomy" id="10036"/>
    <lineage>
        <taxon>Eukaryota</taxon>
        <taxon>Metazoa</taxon>
        <taxon>Chordata</taxon>
        <taxon>Craniata</taxon>
        <taxon>Vertebrata</taxon>
        <taxon>Euteleostomi</taxon>
        <taxon>Mammalia</taxon>
        <taxon>Eutheria</taxon>
        <taxon>Euarchontoglires</taxon>
        <taxon>Glires</taxon>
        <taxon>Rodentia</taxon>
        <taxon>Myomorpha</taxon>
        <taxon>Muroidea</taxon>
        <taxon>Cricetidae</taxon>
        <taxon>Cricetinae</taxon>
        <taxon>Mesocricetus</taxon>
    </lineage>
</organism>
<proteinExistence type="evidence at protein level"/>
<feature type="chain" id="PRO_0000394299" description="Ras-related protein Rab-2A">
    <location>
        <begin position="1" status="less than"/>
        <end position="60" status="greater than"/>
    </location>
</feature>
<feature type="short sequence motif" description="Effector region" evidence="2">
    <location>
        <begin position="16"/>
        <end position="24"/>
    </location>
</feature>
<feature type="binding site" evidence="3">
    <location>
        <position position="1"/>
    </location>
    <ligand>
        <name>GTP</name>
        <dbReference type="ChEBI" id="CHEBI:37565"/>
    </ligand>
</feature>
<feature type="binding site" evidence="2">
    <location>
        <position position="1"/>
    </location>
    <ligand>
        <name>Mg(2+)</name>
        <dbReference type="ChEBI" id="CHEBI:18420"/>
    </ligand>
</feature>
<feature type="binding site" evidence="3">
    <location>
        <position position="2"/>
    </location>
    <ligand>
        <name>GTP</name>
        <dbReference type="ChEBI" id="CHEBI:37565"/>
    </ligand>
</feature>
<feature type="binding site" evidence="3">
    <location>
        <position position="19"/>
    </location>
    <ligand>
        <name>GTP</name>
        <dbReference type="ChEBI" id="CHEBI:37565"/>
    </ligand>
</feature>
<feature type="binding site" evidence="3">
    <location>
        <position position="19"/>
    </location>
    <ligand>
        <name>Mg(2+)</name>
        <dbReference type="ChEBI" id="CHEBI:18420"/>
    </ligand>
</feature>
<feature type="non-consecutive residues" evidence="5">
    <location>
        <begin position="27"/>
        <end position="28"/>
    </location>
</feature>
<feature type="non-consecutive residues" evidence="5">
    <location>
        <begin position="41"/>
        <end position="42"/>
    </location>
</feature>
<feature type="non-terminal residue">
    <location>
        <position position="1"/>
    </location>
</feature>
<feature type="non-terminal residue">
    <location>
        <position position="60"/>
    </location>
</feature>
<accession>P86207</accession>
<comment type="function">
    <text evidence="2">The small GTPases Rab are key regulators of intracellular membrane trafficking, from the formation of transport vesicles to their fusion with membranes. Rabs cycle between active GTP-bound and inactive GDP-bound states. In their active state, drive transport of vesicular carriers from donor organelles to acceptor organelles to regulate the membrane traffic that maintains organelle identity and morphology. RAB2A regulates autophagy by promoting autophagosome-lysosome fusion via recruitment of the HOPS endosomal tethering complex; this process involves autophagosomal RAB2A and lysosomal RAB39A recruitment of HOPS subcomplexes VPS39-VPS11 and VPS41-VPS16-VPS18-VPS33A, respectively, which assemble into a functional complex to mediate membrane tethering and SNAREs-driven membrane fusion. Required for protein transport from the endoplasmic reticulum to the Golgi complex. Regulates the compacted morphology of the Golgi. Together with RAB2B, redundantly required for efficient autophagic flux.</text>
</comment>
<comment type="catalytic activity">
    <reaction evidence="1">
        <text>GTP + H2O = GDP + phosphate + H(+)</text>
        <dbReference type="Rhea" id="RHEA:19669"/>
        <dbReference type="ChEBI" id="CHEBI:15377"/>
        <dbReference type="ChEBI" id="CHEBI:15378"/>
        <dbReference type="ChEBI" id="CHEBI:37565"/>
        <dbReference type="ChEBI" id="CHEBI:43474"/>
        <dbReference type="ChEBI" id="CHEBI:58189"/>
        <dbReference type="EC" id="3.6.5.2"/>
    </reaction>
    <physiologicalReaction direction="left-to-right" evidence="1">
        <dbReference type="Rhea" id="RHEA:19670"/>
    </physiologicalReaction>
</comment>
<comment type="cofactor">
    <cofactor evidence="2">
        <name>Mg(2+)</name>
        <dbReference type="ChEBI" id="CHEBI:18420"/>
    </cofactor>
</comment>
<comment type="activity regulation">
    <text evidence="5">Regulated by guanine nucleotide exchange factors (GEFs) which promote the exchange of bound GDP for free GTP, GTPase activating proteins (GAPs) which increase the GTP hydrolysis activity, and GDP dissociation inhibitors (GDIs) which inhibit the dissociation of the nucleotide from the GTPase.</text>
</comment>
<comment type="subunit">
    <text evidence="1 2">Interacts with PRKCI. Interacts with TRIP11 (By similarity). Interacts (in GTP-bound form) with GARIN1B (By similarity). Interacts (GTP-bound) with HOPS complex component VPS39; interaction contributes to obtaining a functional HOPS complex that promotes autophagosome-lysosome membrane fusion driven by STX17-SNAP29-VAMP8. May interact with VPS41 (By similarity).</text>
</comment>
<comment type="subcellular location">
    <subcellularLocation>
        <location evidence="2">Endoplasmic reticulum-Golgi intermediate compartment membrane</location>
        <topology evidence="2">Lipid-anchor</topology>
        <orientation evidence="5">Cytoplasmic side</orientation>
    </subcellularLocation>
    <subcellularLocation>
        <location evidence="2">Melanosome</location>
    </subcellularLocation>
    <subcellularLocation>
        <location evidence="2">Endoplasmic reticulum membrane</location>
        <topology evidence="2">Lipid-anchor</topology>
        <orientation evidence="5">Cytoplasmic side</orientation>
    </subcellularLocation>
    <subcellularLocation>
        <location evidence="2">Golgi apparatus membrane</location>
        <topology evidence="2">Lipid-anchor</topology>
        <orientation evidence="5">Cytoplasmic side</orientation>
    </subcellularLocation>
    <subcellularLocation>
        <location evidence="1">Cytoplasmic vesicle</location>
        <location evidence="1">Secretory vesicle</location>
        <location evidence="1">Acrosome</location>
    </subcellularLocation>
    <subcellularLocation>
        <location evidence="1">Cytoplasmic vesicle</location>
        <location evidence="1">Autophagosome membrane</location>
        <topology evidence="2">Lipid-anchor</topology>
        <orientation evidence="5">Cytoplasmic side</orientation>
    </subcellularLocation>
    <text evidence="1 2">Localized in the Golgi apparatus in the round spermatids and in the acrosome in the elongating spermatid (By similarity). Identified by mass spectrometry in melanosome fractions from stage I to stage IV (By similarity).</text>
</comment>
<comment type="PTM">
    <text evidence="2">Prenylated. Prenylation is required for association with cellular membranes.</text>
</comment>
<comment type="similarity">
    <text evidence="4">Belongs to the small GTPase superfamily. Rab family.</text>
</comment>
<name>RAB2A_MESAU</name>
<sequence>SCLLLQFTDKRFQPVHDLTIGVEFGARGAAGALLVYDITRRTASNVEEAFINTAKEIYEK</sequence>